<comment type="function">
    <text evidence="2 3 4 5 6 7 8">Ethanolamine phosphate transferase involved in glycosylphosphatidylinositol-anchor biosynthesis. Transfers ethanolamine phosphate to the first alpha-1,4-linked mannose of the glycosylphosphatidylinositol precursor of GPI-anchor. Ethanolamine phosphate on the alpha-1,4-linked mannose is essential for further mannosylation by GPI10 and is necessary for an efficient recognition of GPI lipids and GPI proteins by the GPI transamidase, for the efficient transport of GPI anchored proteins from endoplasmic reticulum to Golgi and for the physiological incorporation of ceramides into GPI anchors by lipid remodeling. Also involved in non-mitochondrial ATP movements across membrane and participates in Golgi and endoplasmic reticulum function, Also required for the incorporation of BGL2 into the cell wall.</text>
</comment>
<comment type="pathway">
    <text>Glycolipid biosynthesis; glycosylphosphatidylinositol-anchor biosynthesis.</text>
</comment>
<comment type="subunit">
    <text evidence="9">Interacts with CSF1; CSF1 channels phosphatidylethanolamine to MCD4 in the endoplasmic reticulum at contact sites to support GPI anchor biosynthesis.</text>
</comment>
<comment type="subcellular location">
    <subcellularLocation>
        <location evidence="9">Endoplasmic reticulum membrane</location>
        <topology evidence="1">Multi-pass membrane protein</topology>
    </subcellularLocation>
    <subcellularLocation>
        <location>Golgi apparatus membrane</location>
        <topology>Multi-pass membrane protein</topology>
    </subcellularLocation>
    <subcellularLocation>
        <location>Vacuole membrane</location>
        <topology>Multi-pass membrane protein</topology>
    </subcellularLocation>
</comment>
<comment type="PTM">
    <text evidence="2">N-glycosylated.</text>
</comment>
<comment type="miscellaneous">
    <text>Target of the inhibitor of GPI biosynthesis YW3548/BE49385A.</text>
</comment>
<comment type="similarity">
    <text evidence="10">Belongs to the PIGG/PIGN/PIGO family. PIGN subfamily.</text>
</comment>
<keyword id="KW-0961">Cell wall biogenesis/degradation</keyword>
<keyword id="KW-0256">Endoplasmic reticulum</keyword>
<keyword id="KW-0325">Glycoprotein</keyword>
<keyword id="KW-0333">Golgi apparatus</keyword>
<keyword id="KW-0337">GPI-anchor biosynthesis</keyword>
<keyword id="KW-0472">Membrane</keyword>
<keyword id="KW-1185">Reference proteome</keyword>
<keyword id="KW-0808">Transferase</keyword>
<keyword id="KW-0812">Transmembrane</keyword>
<keyword id="KW-1133">Transmembrane helix</keyword>
<keyword id="KW-0926">Vacuole</keyword>
<feature type="chain" id="PRO_0000211412" description="GPI ethanolamine phosphate transferase 1">
    <location>
        <begin position="1"/>
        <end position="919"/>
    </location>
</feature>
<feature type="topological domain" description="Cytoplasmic" evidence="1">
    <location>
        <begin position="1"/>
        <end position="9"/>
    </location>
</feature>
<feature type="transmembrane region" description="Helical" evidence="1">
    <location>
        <begin position="10"/>
        <end position="30"/>
    </location>
</feature>
<feature type="topological domain" description="Lumenal" evidence="1">
    <location>
        <begin position="31"/>
        <end position="457"/>
    </location>
</feature>
<feature type="transmembrane region" description="Helical" evidence="1">
    <location>
        <begin position="458"/>
        <end position="478"/>
    </location>
</feature>
<feature type="topological domain" description="Cytoplasmic" evidence="1">
    <location>
        <begin position="479"/>
        <end position="488"/>
    </location>
</feature>
<feature type="transmembrane region" description="Helical" evidence="1">
    <location>
        <begin position="489"/>
        <end position="509"/>
    </location>
</feature>
<feature type="topological domain" description="Lumenal" evidence="1">
    <location>
        <begin position="510"/>
        <end position="512"/>
    </location>
</feature>
<feature type="transmembrane region" description="Helical" evidence="1">
    <location>
        <begin position="513"/>
        <end position="533"/>
    </location>
</feature>
<feature type="topological domain" description="Cytoplasmic" evidence="1">
    <location>
        <begin position="534"/>
        <end position="553"/>
    </location>
</feature>
<feature type="transmembrane region" description="Helical" evidence="1">
    <location>
        <begin position="554"/>
        <end position="574"/>
    </location>
</feature>
<feature type="topological domain" description="Lumenal" evidence="1">
    <location>
        <begin position="575"/>
        <end position="576"/>
    </location>
</feature>
<feature type="transmembrane region" description="Helical" evidence="1">
    <location>
        <begin position="577"/>
        <end position="597"/>
    </location>
</feature>
<feature type="topological domain" description="Cytoplasmic" evidence="1">
    <location>
        <position position="598"/>
    </location>
</feature>
<feature type="transmembrane region" description="Helical" evidence="1">
    <location>
        <begin position="599"/>
        <end position="619"/>
    </location>
</feature>
<feature type="topological domain" description="Lumenal" evidence="1">
    <location>
        <begin position="620"/>
        <end position="626"/>
    </location>
</feature>
<feature type="transmembrane region" description="Helical" evidence="1">
    <location>
        <begin position="627"/>
        <end position="647"/>
    </location>
</feature>
<feature type="topological domain" description="Cytoplasmic" evidence="1">
    <location>
        <begin position="648"/>
        <end position="655"/>
    </location>
</feature>
<feature type="transmembrane region" description="Helical" evidence="1">
    <location>
        <begin position="656"/>
        <end position="676"/>
    </location>
</feature>
<feature type="topological domain" description="Lumenal" evidence="1">
    <location>
        <begin position="677"/>
        <end position="687"/>
    </location>
</feature>
<feature type="transmembrane region" description="Helical" evidence="1">
    <location>
        <begin position="688"/>
        <end position="708"/>
    </location>
</feature>
<feature type="topological domain" description="Cytoplasmic" evidence="1">
    <location>
        <begin position="709"/>
        <end position="720"/>
    </location>
</feature>
<feature type="transmembrane region" description="Helical" evidence="1">
    <location>
        <begin position="721"/>
        <end position="741"/>
    </location>
</feature>
<feature type="topological domain" description="Lumenal" evidence="1">
    <location>
        <begin position="742"/>
        <end position="776"/>
    </location>
</feature>
<feature type="transmembrane region" description="Helical" evidence="1">
    <location>
        <begin position="777"/>
        <end position="797"/>
    </location>
</feature>
<feature type="topological domain" description="Cytoplasmic" evidence="1">
    <location>
        <begin position="798"/>
        <end position="807"/>
    </location>
</feature>
<feature type="transmembrane region" description="Helical" evidence="1">
    <location>
        <begin position="808"/>
        <end position="828"/>
    </location>
</feature>
<feature type="topological domain" description="Lumenal" evidence="1">
    <location>
        <begin position="829"/>
        <end position="848"/>
    </location>
</feature>
<feature type="transmembrane region" description="Helical" evidence="1">
    <location>
        <begin position="849"/>
        <end position="869"/>
    </location>
</feature>
<feature type="topological domain" description="Cytoplasmic" evidence="1">
    <location>
        <begin position="870"/>
        <end position="885"/>
    </location>
</feature>
<feature type="transmembrane region" description="Helical" evidence="1">
    <location>
        <begin position="886"/>
        <end position="906"/>
    </location>
</feature>
<feature type="topological domain" description="Lumenal" evidence="1">
    <location>
        <begin position="907"/>
        <end position="919"/>
    </location>
</feature>
<feature type="glycosylation site" description="N-linked (GlcNAc...) asparagine" evidence="1">
    <location>
        <position position="90"/>
    </location>
</feature>
<feature type="glycosylation site" description="N-linked (GlcNAc...) asparagine" evidence="1">
    <location>
        <position position="138"/>
    </location>
</feature>
<feature type="glycosylation site" description="N-linked (GlcNAc...) asparagine" evidence="1">
    <location>
        <position position="198"/>
    </location>
</feature>
<feature type="glycosylation site" description="N-linked (GlcNAc...) asparagine" evidence="1">
    <location>
        <position position="202"/>
    </location>
</feature>
<feature type="glycosylation site" description="N-linked (GlcNAc...) asparagine" evidence="1">
    <location>
        <position position="286"/>
    </location>
</feature>
<feature type="glycosylation site" description="N-linked (GlcNAc...) asparagine" evidence="1">
    <location>
        <position position="312"/>
    </location>
</feature>
<feature type="mutagenesis site" description="In mcd4-174; defective in endoplasmic reticulum-to-Golgi transport of GPI-anchored proteins." evidence="2">
    <original>G</original>
    <variation>E</variation>
    <location>
        <position position="227"/>
    </location>
</feature>
<feature type="mutagenesis site" description="Induces auxotrophy for ethanolamine." evidence="4">
    <original>P</original>
    <variation>L</variation>
    <location>
        <position position="302"/>
    </location>
</feature>
<feature type="mutagenesis site" description="No effect on subcellular location." evidence="2">
    <original>KK</original>
    <variation>SS</variation>
    <location>
        <begin position="916"/>
        <end position="917"/>
    </location>
</feature>
<organism>
    <name type="scientific">Saccharomyces cerevisiae (strain ATCC 204508 / S288c)</name>
    <name type="common">Baker's yeast</name>
    <dbReference type="NCBI Taxonomy" id="559292"/>
    <lineage>
        <taxon>Eukaryota</taxon>
        <taxon>Fungi</taxon>
        <taxon>Dikarya</taxon>
        <taxon>Ascomycota</taxon>
        <taxon>Saccharomycotina</taxon>
        <taxon>Saccharomycetes</taxon>
        <taxon>Saccharomycetales</taxon>
        <taxon>Saccharomycetaceae</taxon>
        <taxon>Saccharomyces</taxon>
    </lineage>
</organism>
<sequence length="919" mass="105693">MWNKTRTTLLAVGVLFHLFYLWSIFDIYFISPLVHGMSPYQSTPTPPAKRLFLIVGDGLRADTTFDKVTHPVSGKTEFLAPFIRSLVMNNATYGISHTRMPTESRPGHVAMIAGFYEDVSAVTKGWKSNPVNFDSFFNQSTHTYSFGSPDILPMFKDGASDPNKVDTWMYDHTFEDFTQSSIELDAFVFRHLDQLFHNSTLNSTLDYEIRQDGNVFFLHLLGCDTAGHSYRPYSAEYYDNVKYIDDQIPILIDKVNKFFADDKTAFIFTADHGMSAFGSHGDGHPNNTRTPLVAWGAGLNKPVHNPFPVSDNYTENWELSSIKRNDVKQADIASLMSYLIGVNYPKNSVGELPIAYIDGKESDKLAALYNNARSILEQYLVKQDEVIDSQFFYKEYFKFVEKSHSHYLEEIETLIQRISEGENYLEQEAITLTEELMQITLEGLHYLTTYNWRFIRTIVTFGFVGWIFFSFIIFLKSFILENVIDDQKASPLSHAVFGSIGILLNWILFYQHSPFNFYMYLLFPLYFWSYIFTNRSVLRSGIKEFFKGTSPWKRVLITISIISVYEGIVYGFFHRWTFTLITNILAFYPFICGVRELSVNILWIITSVLLSTFTLFDAVKIEDLNQIHLAGLLIILSAFYALYKIHSRINSYTRAIFAIQISLVAAMLAVTHRSVISLQLRQGLPRESQVAGWIIFFVSLFVMPILHYRKPNNDYKVRLLIIYLTFAPSFIILTISFESLFYFLFTSYMVQWIEIENKIKEMKTQKDENWLQVLRVSVIGFFLLQVAFFGTGNVASISSFSLESVCRLLPIFDPFLMGALLMLKLIIPYGLLSTCLGILNLKLNFKDYTISSLIISMSDILSLNFFYLLRTEGSWLDIGITISNYCLAILSSLFMLILEVLGHVLLKNVIIQDKTKKTQ</sequence>
<reference key="1">
    <citation type="journal article" date="1994" name="Yeast">
        <title>DNA sequencing of a 36.2 kb fragment located between the FAS1 and LAP loci of chromosome XI of Saccharomyces cerevisiae.</title>
        <authorList>
            <person name="Vandenbol M."/>
            <person name="Bolle P.-A."/>
            <person name="Dion C."/>
            <person name="Portetelle D."/>
            <person name="Hilger F."/>
        </authorList>
    </citation>
    <scope>NUCLEOTIDE SEQUENCE [GENOMIC DNA]</scope>
    <source>
        <strain>ATCC 204508 / S288c</strain>
    </source>
</reference>
<reference key="2">
    <citation type="journal article" date="1994" name="Nature">
        <title>Complete DNA sequence of yeast chromosome XI.</title>
        <authorList>
            <person name="Dujon B."/>
            <person name="Alexandraki D."/>
            <person name="Andre B."/>
            <person name="Ansorge W."/>
            <person name="Baladron V."/>
            <person name="Ballesta J.P.G."/>
            <person name="Banrevi A."/>
            <person name="Bolle P.-A."/>
            <person name="Bolotin-Fukuhara M."/>
            <person name="Bossier P."/>
            <person name="Bou G."/>
            <person name="Boyer J."/>
            <person name="Buitrago M.J."/>
            <person name="Cheret G."/>
            <person name="Colleaux L."/>
            <person name="Daignan-Fornier B."/>
            <person name="del Rey F."/>
            <person name="Dion C."/>
            <person name="Domdey H."/>
            <person name="Duesterhoeft A."/>
            <person name="Duesterhus S."/>
            <person name="Entian K.-D."/>
            <person name="Erfle H."/>
            <person name="Esteban P.F."/>
            <person name="Feldmann H."/>
            <person name="Fernandes L."/>
            <person name="Fobo G.M."/>
            <person name="Fritz C."/>
            <person name="Fukuhara H."/>
            <person name="Gabel C."/>
            <person name="Gaillon L."/>
            <person name="Garcia-Cantalejo J.M."/>
            <person name="Garcia-Ramirez J.J."/>
            <person name="Gent M.E."/>
            <person name="Ghazvini M."/>
            <person name="Goffeau A."/>
            <person name="Gonzalez A."/>
            <person name="Grothues D."/>
            <person name="Guerreiro P."/>
            <person name="Hegemann J.H."/>
            <person name="Hewitt N."/>
            <person name="Hilger F."/>
            <person name="Hollenberg C.P."/>
            <person name="Horaitis O."/>
            <person name="Indge K.J."/>
            <person name="Jacquier A."/>
            <person name="James C.M."/>
            <person name="Jauniaux J.-C."/>
            <person name="Jimenez A."/>
            <person name="Keuchel H."/>
            <person name="Kirchrath L."/>
            <person name="Kleine K."/>
            <person name="Koetter P."/>
            <person name="Legrain P."/>
            <person name="Liebl S."/>
            <person name="Louis E.J."/>
            <person name="Maia e Silva A."/>
            <person name="Marck C."/>
            <person name="Monnier A.-L."/>
            <person name="Moestl D."/>
            <person name="Mueller S."/>
            <person name="Obermaier B."/>
            <person name="Oliver S.G."/>
            <person name="Pallier C."/>
            <person name="Pascolo S."/>
            <person name="Pfeiffer F."/>
            <person name="Philippsen P."/>
            <person name="Planta R.J."/>
            <person name="Pohl F.M."/>
            <person name="Pohl T.M."/>
            <person name="Poehlmann R."/>
            <person name="Portetelle D."/>
            <person name="Purnelle B."/>
            <person name="Puzos V."/>
            <person name="Ramezani Rad M."/>
            <person name="Rasmussen S.W."/>
            <person name="Remacha M.A."/>
            <person name="Revuelta J.L."/>
            <person name="Richard G.-F."/>
            <person name="Rieger M."/>
            <person name="Rodrigues-Pousada C."/>
            <person name="Rose M."/>
            <person name="Rupp T."/>
            <person name="Santos M.A."/>
            <person name="Schwager C."/>
            <person name="Sensen C."/>
            <person name="Skala J."/>
            <person name="Soares H."/>
            <person name="Sor F."/>
            <person name="Stegemann J."/>
            <person name="Tettelin H."/>
            <person name="Thierry A."/>
            <person name="Tzermia M."/>
            <person name="Urrestarazu L.A."/>
            <person name="van Dyck L."/>
            <person name="van Vliet-Reedijk J.C."/>
            <person name="Valens M."/>
            <person name="Vandenbol M."/>
            <person name="Vilela C."/>
            <person name="Vissers S."/>
            <person name="von Wettstein D."/>
            <person name="Voss H."/>
            <person name="Wiemann S."/>
            <person name="Xu G."/>
            <person name="Zimmermann J."/>
            <person name="Haasemann M."/>
            <person name="Becker I."/>
            <person name="Mewes H.-W."/>
        </authorList>
    </citation>
    <scope>NUCLEOTIDE SEQUENCE [LARGE SCALE GENOMIC DNA]</scope>
    <source>
        <strain>ATCC 204508 / S288c</strain>
    </source>
</reference>
<reference key="3">
    <citation type="journal article" date="2014" name="G3 (Bethesda)">
        <title>The reference genome sequence of Saccharomyces cerevisiae: Then and now.</title>
        <authorList>
            <person name="Engel S.R."/>
            <person name="Dietrich F.S."/>
            <person name="Fisk D.G."/>
            <person name="Binkley G."/>
            <person name="Balakrishnan R."/>
            <person name="Costanzo M.C."/>
            <person name="Dwight S.S."/>
            <person name="Hitz B.C."/>
            <person name="Karra K."/>
            <person name="Nash R.S."/>
            <person name="Weng S."/>
            <person name="Wong E.D."/>
            <person name="Lloyd P."/>
            <person name="Skrzypek M.S."/>
            <person name="Miyasato S.R."/>
            <person name="Simison M."/>
            <person name="Cherry J.M."/>
        </authorList>
    </citation>
    <scope>GENOME REANNOTATION</scope>
    <source>
        <strain>ATCC 204508 / S288c</strain>
    </source>
</reference>
<reference key="4">
    <citation type="journal article" date="1999" name="Mol. Biol. Cell">
        <title>MCD4 encodes a conserved endoplasmic reticulum membrane protein essential for glycosylphosphatidylinositol anchor synthesis in yeast.</title>
        <authorList>
            <person name="Gaynor E.C."/>
            <person name="Mondesert G."/>
            <person name="Grimme S.J."/>
            <person name="Reed S.I."/>
            <person name="Orlean P."/>
            <person name="Emr S.D."/>
        </authorList>
    </citation>
    <scope>FUNCTION</scope>
    <scope>SUBCELLULAR LOCATION</scope>
    <scope>GLYCOSYLATION</scope>
    <scope>MUTAGENESIS OF GLY-227 AND 916-LYS-LYS-917</scope>
</reference>
<reference key="5">
    <citation type="journal article" date="1999" name="Yeast">
        <title>A novel vacuolar protein encoded by SSU21 / MCD4 is involved in cell wall integrity in yeast.</title>
        <authorList>
            <person name="Packeiser A.N."/>
            <person name="Urakov V.N."/>
            <person name="Polyakova Y.A."/>
            <person name="Shimanova N.I."/>
            <person name="Shcherbukhin V.D."/>
            <person name="Smirnov V.N."/>
            <person name="Ter-Avanesyan M.D."/>
        </authorList>
    </citation>
    <scope>FUNCTION</scope>
    <scope>SUBCELLULAR LOCATION</scope>
</reference>
<reference key="6">
    <citation type="journal article" date="2001" name="Biochim. Biophys. Acta">
        <title>A genetic screen for ethanolamine auxotrophs in Saccharomyces cerevisiae identifies a novel mutation in Mcd4p, a protein implicated in glycosylphosphatidylinositol anchor synthesis.</title>
        <authorList>
            <person name="Storey M.K."/>
            <person name="Wu W.-I."/>
            <person name="Voelker D.R."/>
        </authorList>
    </citation>
    <scope>FUNCTION</scope>
    <scope>MUTAGENESIS OF PRO-302</scope>
</reference>
<reference key="7">
    <citation type="journal article" date="2002" name="FEMS Microbiol. Lett.">
        <title>Correct GPI-anchor synthesis is required for the incorporation of endoglucanase/glucanosyltransferase Bgl2p into the Saccharomyces cerevisiae cell wall.</title>
        <authorList>
            <person name="Kalebina T.S."/>
            <person name="Laurinavichiute D.K."/>
            <person name="Packeiser A.N."/>
            <person name="Morenkov O.S."/>
            <person name="Ter-Avanesyan M.D."/>
            <person name="Kulaev I.S."/>
        </authorList>
    </citation>
    <scope>FUNCTION</scope>
</reference>
<reference key="8">
    <citation type="journal article" date="2003" name="J. Biol. Chem.">
        <title>ATP uptake in the Golgi and extracellular release require Mcd4 protein and the vacuolar H+-ATPase.</title>
        <authorList>
            <person name="Zhong X."/>
            <person name="Malhotra R."/>
            <person name="Guidotti G."/>
        </authorList>
    </citation>
    <scope>FUNCTION</scope>
</reference>
<reference key="9">
    <citation type="journal article" date="2003" name="Nature">
        <title>Global analysis of protein localization in budding yeast.</title>
        <authorList>
            <person name="Huh W.-K."/>
            <person name="Falvo J.V."/>
            <person name="Gerke L.C."/>
            <person name="Carroll A.S."/>
            <person name="Howson R.W."/>
            <person name="Weissman J.S."/>
            <person name="O'Shea E.K."/>
        </authorList>
    </citation>
    <scope>SUBCELLULAR LOCATION [LARGE SCALE ANALYSIS]</scope>
</reference>
<reference key="10">
    <citation type="journal article" date="2005" name="J. Biosci. Bioeng.">
        <title>Deletion of MCD 4 involved in glycosylphosphatidylinositol (GPI) anchor synthesis leads to an increase in beta-1,6-glucan level and a decrease in GPI-anchored protein and mannan levels in the cell wall of Saccharomyces cerevisiae.</title>
        <authorList>
            <person name="Maneesri J."/>
            <person name="Azuma M."/>
            <person name="Sakai Y."/>
            <person name="Igarashi K."/>
            <person name="Matsumoto T."/>
            <person name="Fukuda H."/>
            <person name="Kondo A."/>
            <person name="Ooshima H."/>
        </authorList>
    </citation>
    <scope>FUNCTION</scope>
</reference>
<reference key="11">
    <citation type="journal article" date="2006" name="J. Biol. Chem.">
        <title>Ethanolaminephosphate side chain added to glycosylphosphatidylinositol (GPI) anchor by mcd4p is required for ceramide remodeling and forward transport of GPI proteins from endoplasmic reticulum to Golgi.</title>
        <authorList>
            <person name="Zhu Y."/>
            <person name="Vionnet C."/>
            <person name="Conzelmann A."/>
        </authorList>
    </citation>
    <scope>FUNCTION</scope>
</reference>
<reference key="12">
    <citation type="journal article" date="2022" name="J. Cell Biol.">
        <title>Vps13-like proteins provide phosphatidylethanolamine for GPI anchor synthesis in the ER.</title>
        <authorList>
            <person name="Toulmay A."/>
            <person name="Whittle F.B."/>
            <person name="Yang J."/>
            <person name="Bai X."/>
            <person name="Diarra J."/>
            <person name="Banerjee S."/>
            <person name="Levine T.P."/>
            <person name="Golden A."/>
            <person name="Prinz W.A."/>
        </authorList>
    </citation>
    <scope>SUBCELLULAR LOCATION</scope>
    <scope>INTERACTION WITH CSF1</scope>
</reference>
<protein>
    <recommendedName>
        <fullName>GPI ethanolamine phosphate transferase 1</fullName>
        <ecNumber>2.-.-.-</ecNumber>
    </recommendedName>
    <alternativeName>
        <fullName>Morphogenesis checkpoint-dependent protein 4</fullName>
    </alternativeName>
    <alternativeName>
        <fullName>Supersecretion of u-PA protein 21</fullName>
    </alternativeName>
</protein>
<dbReference type="EC" id="2.-.-.-"/>
<dbReference type="EMBL" id="Z26877">
    <property type="protein sequence ID" value="CAA81489.1"/>
    <property type="molecule type" value="Genomic_DNA"/>
</dbReference>
<dbReference type="EMBL" id="Z28165">
    <property type="protein sequence ID" value="CAA82007.1"/>
    <property type="molecule type" value="Genomic_DNA"/>
</dbReference>
<dbReference type="EMBL" id="BK006944">
    <property type="protein sequence ID" value="DAA09000.1"/>
    <property type="molecule type" value="Genomic_DNA"/>
</dbReference>
<dbReference type="PIR" id="S37786">
    <property type="entry name" value="S37786"/>
</dbReference>
<dbReference type="RefSeq" id="NP_012756.1">
    <property type="nucleotide sequence ID" value="NM_001179731.1"/>
</dbReference>
<dbReference type="SMR" id="P36051"/>
<dbReference type="BioGRID" id="33972">
    <property type="interactions" value="49"/>
</dbReference>
<dbReference type="DIP" id="DIP-8272N"/>
<dbReference type="FunCoup" id="P36051">
    <property type="interactions" value="601"/>
</dbReference>
<dbReference type="IntAct" id="P36051">
    <property type="interactions" value="16"/>
</dbReference>
<dbReference type="MINT" id="P36051"/>
<dbReference type="STRING" id="4932.YKL165C"/>
<dbReference type="TCDB" id="9.A.6.1.1">
    <property type="family name" value="the atp exporter (atp-e) family"/>
</dbReference>
<dbReference type="GlyCosmos" id="P36051">
    <property type="glycosylation" value="6 sites, No reported glycans"/>
</dbReference>
<dbReference type="GlyGen" id="P36051">
    <property type="glycosylation" value="7 sites"/>
</dbReference>
<dbReference type="iPTMnet" id="P36051"/>
<dbReference type="PaxDb" id="4932-YKL165C"/>
<dbReference type="PeptideAtlas" id="P36051"/>
<dbReference type="EnsemblFungi" id="YKL165C_mRNA">
    <property type="protein sequence ID" value="YKL165C"/>
    <property type="gene ID" value="YKL165C"/>
</dbReference>
<dbReference type="GeneID" id="853690"/>
<dbReference type="KEGG" id="sce:YKL165C"/>
<dbReference type="AGR" id="SGD:S000001648"/>
<dbReference type="SGD" id="S000001648">
    <property type="gene designation" value="MCD4"/>
</dbReference>
<dbReference type="VEuPathDB" id="FungiDB:YKL165C"/>
<dbReference type="eggNOG" id="KOG2124">
    <property type="taxonomic scope" value="Eukaryota"/>
</dbReference>
<dbReference type="GeneTree" id="ENSGT00390000017600"/>
<dbReference type="HOGENOM" id="CLU_007676_0_0_1"/>
<dbReference type="InParanoid" id="P36051"/>
<dbReference type="OMA" id="QSYFHRE"/>
<dbReference type="OrthoDB" id="2748310at2759"/>
<dbReference type="BioCyc" id="YEAST:G3O-31933-MONOMER"/>
<dbReference type="BRENDA" id="2.7.7.B25">
    <property type="organism ID" value="984"/>
</dbReference>
<dbReference type="Reactome" id="R-SCE-162710">
    <property type="pathway name" value="Synthesis of glycosylphosphatidylinositol (GPI)"/>
</dbReference>
<dbReference type="UniPathway" id="UPA00196"/>
<dbReference type="BioGRID-ORCS" id="853690">
    <property type="hits" value="1 hit in 10 CRISPR screens"/>
</dbReference>
<dbReference type="PRO" id="PR:P36051"/>
<dbReference type="Proteomes" id="UP000002311">
    <property type="component" value="Chromosome XI"/>
</dbReference>
<dbReference type="RNAct" id="P36051">
    <property type="molecule type" value="protein"/>
</dbReference>
<dbReference type="GO" id="GO:0005783">
    <property type="term" value="C:endoplasmic reticulum"/>
    <property type="evidence" value="ECO:0000314"/>
    <property type="project" value="SGD"/>
</dbReference>
<dbReference type="GO" id="GO:0005789">
    <property type="term" value="C:endoplasmic reticulum membrane"/>
    <property type="evidence" value="ECO:0000318"/>
    <property type="project" value="GO_Central"/>
</dbReference>
<dbReference type="GO" id="GO:0009277">
    <property type="term" value="C:fungal-type cell wall"/>
    <property type="evidence" value="ECO:0000314"/>
    <property type="project" value="SGD"/>
</dbReference>
<dbReference type="GO" id="GO:0000324">
    <property type="term" value="C:fungal-type vacuole"/>
    <property type="evidence" value="ECO:0000314"/>
    <property type="project" value="SGD"/>
</dbReference>
<dbReference type="GO" id="GO:0000139">
    <property type="term" value="C:Golgi membrane"/>
    <property type="evidence" value="ECO:0007669"/>
    <property type="project" value="UniProtKB-SubCell"/>
</dbReference>
<dbReference type="GO" id="GO:0005774">
    <property type="term" value="C:vacuolar membrane"/>
    <property type="evidence" value="ECO:0007669"/>
    <property type="project" value="UniProtKB-SubCell"/>
</dbReference>
<dbReference type="GO" id="GO:0051377">
    <property type="term" value="F:mannose-ethanolamine phosphotransferase activity"/>
    <property type="evidence" value="ECO:0000314"/>
    <property type="project" value="UniProtKB"/>
</dbReference>
<dbReference type="GO" id="GO:0015867">
    <property type="term" value="P:ATP transport"/>
    <property type="evidence" value="ECO:0000314"/>
    <property type="project" value="SGD"/>
</dbReference>
<dbReference type="GO" id="GO:0071555">
    <property type="term" value="P:cell wall organization"/>
    <property type="evidence" value="ECO:0007669"/>
    <property type="project" value="UniProtKB-KW"/>
</dbReference>
<dbReference type="GO" id="GO:0006506">
    <property type="term" value="P:GPI anchor biosynthetic process"/>
    <property type="evidence" value="ECO:0000314"/>
    <property type="project" value="UniProtKB"/>
</dbReference>
<dbReference type="CDD" id="cd16020">
    <property type="entry name" value="GPI_EPT_1"/>
    <property type="match status" value="1"/>
</dbReference>
<dbReference type="FunFam" id="3.40.720.10:FF:000015">
    <property type="entry name" value="GPI ethanolamine phosphate transferase 1"/>
    <property type="match status" value="1"/>
</dbReference>
<dbReference type="Gene3D" id="3.40.720.10">
    <property type="entry name" value="Alkaline Phosphatase, subunit A"/>
    <property type="match status" value="1"/>
</dbReference>
<dbReference type="InterPro" id="IPR017850">
    <property type="entry name" value="Alkaline_phosphatase_core_sf"/>
</dbReference>
<dbReference type="InterPro" id="IPR007070">
    <property type="entry name" value="GPI_EtnP_transferase_1"/>
</dbReference>
<dbReference type="InterPro" id="IPR017852">
    <property type="entry name" value="GPI_EtnP_transferase_1_C"/>
</dbReference>
<dbReference type="InterPro" id="IPR037671">
    <property type="entry name" value="PIGN_N"/>
</dbReference>
<dbReference type="InterPro" id="IPR000917">
    <property type="entry name" value="Sulfatase_N"/>
</dbReference>
<dbReference type="PANTHER" id="PTHR12250:SF0">
    <property type="entry name" value="GPI ETHANOLAMINE PHOSPHATE TRANSFERASE 1"/>
    <property type="match status" value="1"/>
</dbReference>
<dbReference type="PANTHER" id="PTHR12250">
    <property type="entry name" value="PHOSPHATIDYLINOSITOL GLYCAN, CLASS N"/>
    <property type="match status" value="1"/>
</dbReference>
<dbReference type="Pfam" id="PF04987">
    <property type="entry name" value="PigN"/>
    <property type="match status" value="1"/>
</dbReference>
<dbReference type="Pfam" id="PF00884">
    <property type="entry name" value="Sulfatase"/>
    <property type="match status" value="1"/>
</dbReference>
<dbReference type="SUPFAM" id="SSF53649">
    <property type="entry name" value="Alkaline phosphatase-like"/>
    <property type="match status" value="1"/>
</dbReference>
<name>MCD4_YEAST</name>
<accession>P36051</accession>
<accession>D6VX34</accession>
<evidence type="ECO:0000255" key="1"/>
<evidence type="ECO:0000269" key="2">
    <source>
    </source>
</evidence>
<evidence type="ECO:0000269" key="3">
    <source>
    </source>
</evidence>
<evidence type="ECO:0000269" key="4">
    <source>
    </source>
</evidence>
<evidence type="ECO:0000269" key="5">
    <source>
    </source>
</evidence>
<evidence type="ECO:0000269" key="6">
    <source>
    </source>
</evidence>
<evidence type="ECO:0000269" key="7">
    <source>
    </source>
</evidence>
<evidence type="ECO:0000269" key="8">
    <source>
    </source>
</evidence>
<evidence type="ECO:0000269" key="9">
    <source>
    </source>
</evidence>
<evidence type="ECO:0000305" key="10"/>
<gene>
    <name type="primary">MCD4</name>
    <name type="synonym">FSR2</name>
    <name type="synonym">SSU21</name>
    <name type="synonym">ZRG16</name>
    <name type="ordered locus">YKL165C</name>
    <name type="ORF">YKL619</name>
</gene>
<proteinExistence type="evidence at protein level"/>